<name>DNAK_RUBXD</name>
<accession>Q1AXX6</accession>
<dbReference type="EMBL" id="CP000386">
    <property type="protein sequence ID" value="ABG03752.1"/>
    <property type="molecule type" value="Genomic_DNA"/>
</dbReference>
<dbReference type="RefSeq" id="WP_011563770.1">
    <property type="nucleotide sequence ID" value="NC_008148.1"/>
</dbReference>
<dbReference type="SMR" id="Q1AXX6"/>
<dbReference type="STRING" id="266117.Rxyl_0784"/>
<dbReference type="KEGG" id="rxy:Rxyl_0784"/>
<dbReference type="eggNOG" id="COG0443">
    <property type="taxonomic scope" value="Bacteria"/>
</dbReference>
<dbReference type="HOGENOM" id="CLU_005965_2_4_11"/>
<dbReference type="OrthoDB" id="9766019at2"/>
<dbReference type="PhylomeDB" id="Q1AXX6"/>
<dbReference type="Proteomes" id="UP000006637">
    <property type="component" value="Chromosome"/>
</dbReference>
<dbReference type="GO" id="GO:0005524">
    <property type="term" value="F:ATP binding"/>
    <property type="evidence" value="ECO:0007669"/>
    <property type="project" value="UniProtKB-UniRule"/>
</dbReference>
<dbReference type="GO" id="GO:0140662">
    <property type="term" value="F:ATP-dependent protein folding chaperone"/>
    <property type="evidence" value="ECO:0007669"/>
    <property type="project" value="InterPro"/>
</dbReference>
<dbReference type="GO" id="GO:0051082">
    <property type="term" value="F:unfolded protein binding"/>
    <property type="evidence" value="ECO:0007669"/>
    <property type="project" value="InterPro"/>
</dbReference>
<dbReference type="CDD" id="cd10234">
    <property type="entry name" value="ASKHA_NBD_HSP70_DnaK-like"/>
    <property type="match status" value="1"/>
</dbReference>
<dbReference type="FunFam" id="2.60.34.10:FF:000014">
    <property type="entry name" value="Chaperone protein DnaK HSP70"/>
    <property type="match status" value="1"/>
</dbReference>
<dbReference type="FunFam" id="1.20.1270.10:FF:000001">
    <property type="entry name" value="Molecular chaperone DnaK"/>
    <property type="match status" value="1"/>
</dbReference>
<dbReference type="FunFam" id="3.30.420.40:FF:000004">
    <property type="entry name" value="Molecular chaperone DnaK"/>
    <property type="match status" value="1"/>
</dbReference>
<dbReference type="FunFam" id="3.90.640.10:FF:000003">
    <property type="entry name" value="Molecular chaperone DnaK"/>
    <property type="match status" value="1"/>
</dbReference>
<dbReference type="Gene3D" id="1.20.1270.10">
    <property type="match status" value="1"/>
</dbReference>
<dbReference type="Gene3D" id="3.30.420.40">
    <property type="match status" value="2"/>
</dbReference>
<dbReference type="Gene3D" id="3.90.640.10">
    <property type="entry name" value="Actin, Chain A, domain 4"/>
    <property type="match status" value="1"/>
</dbReference>
<dbReference type="Gene3D" id="2.60.34.10">
    <property type="entry name" value="Substrate Binding Domain Of DNAk, Chain A, domain 1"/>
    <property type="match status" value="1"/>
</dbReference>
<dbReference type="HAMAP" id="MF_00332">
    <property type="entry name" value="DnaK"/>
    <property type="match status" value="1"/>
</dbReference>
<dbReference type="InterPro" id="IPR043129">
    <property type="entry name" value="ATPase_NBD"/>
</dbReference>
<dbReference type="InterPro" id="IPR012725">
    <property type="entry name" value="Chaperone_DnaK"/>
</dbReference>
<dbReference type="InterPro" id="IPR018181">
    <property type="entry name" value="Heat_shock_70_CS"/>
</dbReference>
<dbReference type="InterPro" id="IPR029048">
    <property type="entry name" value="HSP70_C_sf"/>
</dbReference>
<dbReference type="InterPro" id="IPR029047">
    <property type="entry name" value="HSP70_peptide-bd_sf"/>
</dbReference>
<dbReference type="InterPro" id="IPR013126">
    <property type="entry name" value="Hsp_70_fam"/>
</dbReference>
<dbReference type="NCBIfam" id="NF001413">
    <property type="entry name" value="PRK00290.1"/>
    <property type="match status" value="1"/>
</dbReference>
<dbReference type="NCBIfam" id="NF003520">
    <property type="entry name" value="PRK05183.1"/>
    <property type="match status" value="1"/>
</dbReference>
<dbReference type="NCBIfam" id="TIGR02350">
    <property type="entry name" value="prok_dnaK"/>
    <property type="match status" value="1"/>
</dbReference>
<dbReference type="PANTHER" id="PTHR19375">
    <property type="entry name" value="HEAT SHOCK PROTEIN 70KDA"/>
    <property type="match status" value="1"/>
</dbReference>
<dbReference type="Pfam" id="PF00012">
    <property type="entry name" value="HSP70"/>
    <property type="match status" value="1"/>
</dbReference>
<dbReference type="PRINTS" id="PR00301">
    <property type="entry name" value="HEATSHOCK70"/>
</dbReference>
<dbReference type="SUPFAM" id="SSF53067">
    <property type="entry name" value="Actin-like ATPase domain"/>
    <property type="match status" value="2"/>
</dbReference>
<dbReference type="SUPFAM" id="SSF100934">
    <property type="entry name" value="Heat shock protein 70kD (HSP70), C-terminal subdomain"/>
    <property type="match status" value="1"/>
</dbReference>
<dbReference type="SUPFAM" id="SSF100920">
    <property type="entry name" value="Heat shock protein 70kD (HSP70), peptide-binding domain"/>
    <property type="match status" value="1"/>
</dbReference>
<dbReference type="PROSITE" id="PS00297">
    <property type="entry name" value="HSP70_1"/>
    <property type="match status" value="1"/>
</dbReference>
<dbReference type="PROSITE" id="PS00329">
    <property type="entry name" value="HSP70_2"/>
    <property type="match status" value="1"/>
</dbReference>
<dbReference type="PROSITE" id="PS01036">
    <property type="entry name" value="HSP70_3"/>
    <property type="match status" value="1"/>
</dbReference>
<gene>
    <name evidence="1" type="primary">dnaK</name>
    <name type="ordered locus">Rxyl_0784</name>
</gene>
<keyword id="KW-0067">ATP-binding</keyword>
<keyword id="KW-0143">Chaperone</keyword>
<keyword id="KW-0547">Nucleotide-binding</keyword>
<keyword id="KW-0597">Phosphoprotein</keyword>
<keyword id="KW-1185">Reference proteome</keyword>
<keyword id="KW-0346">Stress response</keyword>
<proteinExistence type="inferred from homology"/>
<feature type="chain" id="PRO_1000059653" description="Chaperone protein DnaK">
    <location>
        <begin position="1"/>
        <end position="636"/>
    </location>
</feature>
<feature type="region of interest" description="Disordered" evidence="2">
    <location>
        <begin position="596"/>
        <end position="636"/>
    </location>
</feature>
<feature type="compositionally biased region" description="Low complexity" evidence="2">
    <location>
        <begin position="596"/>
        <end position="607"/>
    </location>
</feature>
<feature type="compositionally biased region" description="Acidic residues" evidence="2">
    <location>
        <begin position="613"/>
        <end position="636"/>
    </location>
</feature>
<feature type="modified residue" description="Phosphothreonine; by autocatalysis" evidence="1">
    <location>
        <position position="197"/>
    </location>
</feature>
<protein>
    <recommendedName>
        <fullName evidence="1">Chaperone protein DnaK</fullName>
    </recommendedName>
    <alternativeName>
        <fullName evidence="1">HSP70</fullName>
    </alternativeName>
    <alternativeName>
        <fullName evidence="1">Heat shock 70 kDa protein</fullName>
    </alternativeName>
    <alternativeName>
        <fullName evidence="1">Heat shock protein 70</fullName>
    </alternativeName>
</protein>
<organism>
    <name type="scientific">Rubrobacter xylanophilus (strain DSM 9941 / JCM 11954 / NBRC 16129 / PRD-1)</name>
    <dbReference type="NCBI Taxonomy" id="266117"/>
    <lineage>
        <taxon>Bacteria</taxon>
        <taxon>Bacillati</taxon>
        <taxon>Actinomycetota</taxon>
        <taxon>Rubrobacteria</taxon>
        <taxon>Rubrobacterales</taxon>
        <taxon>Rubrobacteraceae</taxon>
        <taxon>Rubrobacter</taxon>
    </lineage>
</organism>
<comment type="function">
    <text evidence="1">Acts as a chaperone.</text>
</comment>
<comment type="induction">
    <text evidence="1">By stress conditions e.g. heat shock.</text>
</comment>
<comment type="similarity">
    <text evidence="1">Belongs to the heat shock protein 70 family.</text>
</comment>
<reference key="1">
    <citation type="submission" date="2006-06" db="EMBL/GenBank/DDBJ databases">
        <title>Complete sequence of Rubrobacter xylanophilus DSM 9941.</title>
        <authorList>
            <consortium name="US DOE Joint Genome Institute"/>
            <person name="Copeland A."/>
            <person name="Lucas S."/>
            <person name="Lapidus A."/>
            <person name="Barry K."/>
            <person name="Detter J.C."/>
            <person name="Glavina del Rio T."/>
            <person name="Hammon N."/>
            <person name="Israni S."/>
            <person name="Dalin E."/>
            <person name="Tice H."/>
            <person name="Pitluck S."/>
            <person name="Munk A.C."/>
            <person name="Brettin T."/>
            <person name="Bruce D."/>
            <person name="Han C."/>
            <person name="Tapia R."/>
            <person name="Gilna P."/>
            <person name="Schmutz J."/>
            <person name="Larimer F."/>
            <person name="Land M."/>
            <person name="Hauser L."/>
            <person name="Kyrpides N."/>
            <person name="Lykidis A."/>
            <person name="da Costa M.S."/>
            <person name="Rainey F.A."/>
            <person name="Empadinhas N."/>
            <person name="Jolivet E."/>
            <person name="Battista J.R."/>
            <person name="Richardson P."/>
        </authorList>
    </citation>
    <scope>NUCLEOTIDE SEQUENCE [LARGE SCALE GENOMIC DNA]</scope>
    <source>
        <strain>DSM 9941 / JCM 11954 / NBRC 16129 / PRD-1</strain>
    </source>
</reference>
<evidence type="ECO:0000255" key="1">
    <source>
        <dbReference type="HAMAP-Rule" id="MF_00332"/>
    </source>
</evidence>
<evidence type="ECO:0000256" key="2">
    <source>
        <dbReference type="SAM" id="MobiDB-lite"/>
    </source>
</evidence>
<sequence length="636" mass="69174">MGKSIGIDLGTTNSCVAVLEGGDPVVIPNAEGERTTPSVVAFDRKSGERLVGQLARRQAVTNPERTVYSIKRFMGRRYNDVKQEAERVGYQVVPGPHGDVRVRLGDKDYSPPEISAMILQKLKRDAEDYLGEEVTDAVITVPAYFEDAQRQATKDAGRIAGLNVKRIINEPTAAALAYGLDKENDQTILVFDLGGGTFDVSILELGDGVFEVKATSGNNHLGGDDFDAKVVEWIVEEFKKAEGIDLSRDKMAMQRLVEAAEKAKKELSSTTSTNINLPFITADANGPKHLDLTLTRAQFNKLTADLVEATAGPVRQAMQDAGLKPGDVDQVILVGGSTRIPAVQEKVKELTGKEPHKGINPDEVVAIGAAIQAGVLAGEVKDVLLLDVTPLSLGIETKGGVFTKLIERNTTIPTRKSEIFTTAEDNQQSVEIKVYQGEREIAAHNKLIGNFQLVGIPPAPRGVPQIEVTFDIDANGILNVGAKDLGTGKEQKITITASSGLSDQEIEQMVRDAEAHAEEDRRKREEAEIRNNADNLVYSVERSLKEVDGKVDSSTREEIEKAIKEAKEALAGDDIEEIKRKQEALMSASHKLSQVLYQQAQEQQQSGSSGGSSDEDVVEDAEIVDEEDEEKRDDNR</sequence>